<reference key="1">
    <citation type="submission" date="2006-11" db="EMBL/GenBank/DDBJ databases">
        <title>Sequence of Campylobacter fetus subsp. fetus 82-40.</title>
        <authorList>
            <person name="Fouts D.E."/>
            <person name="Nelson K.E."/>
        </authorList>
    </citation>
    <scope>NUCLEOTIDE SEQUENCE [LARGE SCALE GENOMIC DNA]</scope>
    <source>
        <strain>82-40</strain>
    </source>
</reference>
<proteinExistence type="inferred from homology"/>
<gene>
    <name evidence="1" type="primary">rsmG</name>
    <name type="ordered locus">CFF8240_1576</name>
</gene>
<organism>
    <name type="scientific">Campylobacter fetus subsp. fetus (strain 82-40)</name>
    <dbReference type="NCBI Taxonomy" id="360106"/>
    <lineage>
        <taxon>Bacteria</taxon>
        <taxon>Pseudomonadati</taxon>
        <taxon>Campylobacterota</taxon>
        <taxon>Epsilonproteobacteria</taxon>
        <taxon>Campylobacterales</taxon>
        <taxon>Campylobacteraceae</taxon>
        <taxon>Campylobacter</taxon>
    </lineage>
</organism>
<evidence type="ECO:0000255" key="1">
    <source>
        <dbReference type="HAMAP-Rule" id="MF_00074"/>
    </source>
</evidence>
<dbReference type="EC" id="2.1.1.170" evidence="1"/>
<dbReference type="EMBL" id="CP000487">
    <property type="protein sequence ID" value="ABK82389.1"/>
    <property type="molecule type" value="Genomic_DNA"/>
</dbReference>
<dbReference type="RefSeq" id="WP_011732247.1">
    <property type="nucleotide sequence ID" value="NC_008599.1"/>
</dbReference>
<dbReference type="SMR" id="A0RR76"/>
<dbReference type="GeneID" id="61065393"/>
<dbReference type="KEGG" id="cff:CFF8240_1576"/>
<dbReference type="PATRIC" id="fig|360106.6.peg.1536"/>
<dbReference type="eggNOG" id="COG0357">
    <property type="taxonomic scope" value="Bacteria"/>
</dbReference>
<dbReference type="HOGENOM" id="CLU_065341_2_1_7"/>
<dbReference type="Proteomes" id="UP000000760">
    <property type="component" value="Chromosome"/>
</dbReference>
<dbReference type="GO" id="GO:0005829">
    <property type="term" value="C:cytosol"/>
    <property type="evidence" value="ECO:0007669"/>
    <property type="project" value="TreeGrafter"/>
</dbReference>
<dbReference type="GO" id="GO:0070043">
    <property type="term" value="F:rRNA (guanine-N7-)-methyltransferase activity"/>
    <property type="evidence" value="ECO:0007669"/>
    <property type="project" value="UniProtKB-UniRule"/>
</dbReference>
<dbReference type="Gene3D" id="3.40.50.150">
    <property type="entry name" value="Vaccinia Virus protein VP39"/>
    <property type="match status" value="1"/>
</dbReference>
<dbReference type="HAMAP" id="MF_00074">
    <property type="entry name" value="16SrRNA_methyltr_G"/>
    <property type="match status" value="1"/>
</dbReference>
<dbReference type="InterPro" id="IPR003682">
    <property type="entry name" value="rRNA_ssu_MeTfrase_G"/>
</dbReference>
<dbReference type="InterPro" id="IPR029063">
    <property type="entry name" value="SAM-dependent_MTases_sf"/>
</dbReference>
<dbReference type="NCBIfam" id="TIGR00138">
    <property type="entry name" value="rsmG_gidB"/>
    <property type="match status" value="1"/>
</dbReference>
<dbReference type="PANTHER" id="PTHR31760">
    <property type="entry name" value="S-ADENOSYL-L-METHIONINE-DEPENDENT METHYLTRANSFERASES SUPERFAMILY PROTEIN"/>
    <property type="match status" value="1"/>
</dbReference>
<dbReference type="PANTHER" id="PTHR31760:SF0">
    <property type="entry name" value="S-ADENOSYL-L-METHIONINE-DEPENDENT METHYLTRANSFERASES SUPERFAMILY PROTEIN"/>
    <property type="match status" value="1"/>
</dbReference>
<dbReference type="Pfam" id="PF02527">
    <property type="entry name" value="GidB"/>
    <property type="match status" value="1"/>
</dbReference>
<dbReference type="PIRSF" id="PIRSF003078">
    <property type="entry name" value="GidB"/>
    <property type="match status" value="1"/>
</dbReference>
<dbReference type="SUPFAM" id="SSF53335">
    <property type="entry name" value="S-adenosyl-L-methionine-dependent methyltransferases"/>
    <property type="match status" value="1"/>
</dbReference>
<comment type="function">
    <text evidence="1">Specifically methylates the N7 position of guanine in position 527 of 16S rRNA.</text>
</comment>
<comment type="catalytic activity">
    <reaction evidence="1">
        <text>guanosine(527) in 16S rRNA + S-adenosyl-L-methionine = N(7)-methylguanosine(527) in 16S rRNA + S-adenosyl-L-homocysteine</text>
        <dbReference type="Rhea" id="RHEA:42732"/>
        <dbReference type="Rhea" id="RHEA-COMP:10209"/>
        <dbReference type="Rhea" id="RHEA-COMP:10210"/>
        <dbReference type="ChEBI" id="CHEBI:57856"/>
        <dbReference type="ChEBI" id="CHEBI:59789"/>
        <dbReference type="ChEBI" id="CHEBI:74269"/>
        <dbReference type="ChEBI" id="CHEBI:74480"/>
        <dbReference type="EC" id="2.1.1.170"/>
    </reaction>
</comment>
<comment type="subcellular location">
    <subcellularLocation>
        <location evidence="1">Cytoplasm</location>
    </subcellularLocation>
</comment>
<comment type="similarity">
    <text evidence="1">Belongs to the methyltransferase superfamily. RNA methyltransferase RsmG family.</text>
</comment>
<name>RSMG_CAMFF</name>
<accession>A0RR76</accession>
<keyword id="KW-0963">Cytoplasm</keyword>
<keyword id="KW-0489">Methyltransferase</keyword>
<keyword id="KW-0698">rRNA processing</keyword>
<keyword id="KW-0949">S-adenosyl-L-methionine</keyword>
<keyword id="KW-0808">Transferase</keyword>
<protein>
    <recommendedName>
        <fullName evidence="1">Ribosomal RNA small subunit methyltransferase G</fullName>
        <ecNumber evidence="1">2.1.1.170</ecNumber>
    </recommendedName>
    <alternativeName>
        <fullName evidence="1">16S rRNA 7-methylguanosine methyltransferase</fullName>
        <shortName evidence="1">16S rRNA m7G methyltransferase</shortName>
    </alternativeName>
</protein>
<sequence length="182" mass="20594">MNLPDNFWNKVSEFEIILKQFNKIHSLTNYRDIKPVVEDSMKPLEFLDFNPKIVIDVGSGAGFPAIFLSLILNSSEFHLYEPIAKKSSFLSYVGAALNLKNITVHPSKIESCQKIKADLITSRALSKTLFLIEICRGFYDENTTFLLYKGDGAKEEISNLKCKNSIISSGKRNYLFLKGVKC</sequence>
<feature type="chain" id="PRO_0000342908" description="Ribosomal RNA small subunit methyltransferase G">
    <location>
        <begin position="1"/>
        <end position="182"/>
    </location>
</feature>
<feature type="binding site" evidence="1">
    <location>
        <position position="58"/>
    </location>
    <ligand>
        <name>S-adenosyl-L-methionine</name>
        <dbReference type="ChEBI" id="CHEBI:59789"/>
    </ligand>
</feature>
<feature type="binding site" evidence="1">
    <location>
        <position position="63"/>
    </location>
    <ligand>
        <name>S-adenosyl-L-methionine</name>
        <dbReference type="ChEBI" id="CHEBI:59789"/>
    </ligand>
</feature>
<feature type="binding site" evidence="1">
    <location>
        <begin position="109"/>
        <end position="110"/>
    </location>
    <ligand>
        <name>S-adenosyl-L-methionine</name>
        <dbReference type="ChEBI" id="CHEBI:59789"/>
    </ligand>
</feature>
<feature type="binding site" evidence="1">
    <location>
        <position position="123"/>
    </location>
    <ligand>
        <name>S-adenosyl-L-methionine</name>
        <dbReference type="ChEBI" id="CHEBI:59789"/>
    </ligand>
</feature>